<dbReference type="EC" id="6.3.5.2" evidence="1"/>
<dbReference type="EMBL" id="AE008923">
    <property type="protein sequence ID" value="AAM37140.1"/>
    <property type="molecule type" value="Genomic_DNA"/>
</dbReference>
<dbReference type="RefSeq" id="WP_011051494.1">
    <property type="nucleotide sequence ID" value="NC_003919.1"/>
</dbReference>
<dbReference type="SMR" id="Q8PK88"/>
<dbReference type="MEROPS" id="C26.957"/>
<dbReference type="GeneID" id="66911406"/>
<dbReference type="KEGG" id="xac:XAC2287"/>
<dbReference type="eggNOG" id="COG0518">
    <property type="taxonomic scope" value="Bacteria"/>
</dbReference>
<dbReference type="eggNOG" id="COG0519">
    <property type="taxonomic scope" value="Bacteria"/>
</dbReference>
<dbReference type="HOGENOM" id="CLU_014340_0_5_6"/>
<dbReference type="UniPathway" id="UPA00189">
    <property type="reaction ID" value="UER00296"/>
</dbReference>
<dbReference type="Proteomes" id="UP000000576">
    <property type="component" value="Chromosome"/>
</dbReference>
<dbReference type="GO" id="GO:0005829">
    <property type="term" value="C:cytosol"/>
    <property type="evidence" value="ECO:0007669"/>
    <property type="project" value="TreeGrafter"/>
</dbReference>
<dbReference type="GO" id="GO:0005524">
    <property type="term" value="F:ATP binding"/>
    <property type="evidence" value="ECO:0007669"/>
    <property type="project" value="UniProtKB-UniRule"/>
</dbReference>
<dbReference type="GO" id="GO:0003921">
    <property type="term" value="F:GMP synthase activity"/>
    <property type="evidence" value="ECO:0007669"/>
    <property type="project" value="InterPro"/>
</dbReference>
<dbReference type="CDD" id="cd01742">
    <property type="entry name" value="GATase1_GMP_Synthase"/>
    <property type="match status" value="1"/>
</dbReference>
<dbReference type="CDD" id="cd01997">
    <property type="entry name" value="GMP_synthase_C"/>
    <property type="match status" value="1"/>
</dbReference>
<dbReference type="FunFam" id="3.30.300.10:FF:000002">
    <property type="entry name" value="GMP synthase [glutamine-hydrolyzing]"/>
    <property type="match status" value="1"/>
</dbReference>
<dbReference type="FunFam" id="3.40.50.620:FF:000001">
    <property type="entry name" value="GMP synthase [glutamine-hydrolyzing]"/>
    <property type="match status" value="1"/>
</dbReference>
<dbReference type="FunFam" id="3.40.50.880:FF:000001">
    <property type="entry name" value="GMP synthase [glutamine-hydrolyzing]"/>
    <property type="match status" value="1"/>
</dbReference>
<dbReference type="Gene3D" id="3.30.300.10">
    <property type="match status" value="1"/>
</dbReference>
<dbReference type="Gene3D" id="3.40.50.880">
    <property type="match status" value="1"/>
</dbReference>
<dbReference type="Gene3D" id="3.40.50.620">
    <property type="entry name" value="HUPs"/>
    <property type="match status" value="1"/>
</dbReference>
<dbReference type="HAMAP" id="MF_00344">
    <property type="entry name" value="GMP_synthase"/>
    <property type="match status" value="1"/>
</dbReference>
<dbReference type="InterPro" id="IPR029062">
    <property type="entry name" value="Class_I_gatase-like"/>
</dbReference>
<dbReference type="InterPro" id="IPR017926">
    <property type="entry name" value="GATASE"/>
</dbReference>
<dbReference type="InterPro" id="IPR001674">
    <property type="entry name" value="GMP_synth_C"/>
</dbReference>
<dbReference type="InterPro" id="IPR004739">
    <property type="entry name" value="GMP_synth_GATase"/>
</dbReference>
<dbReference type="InterPro" id="IPR022955">
    <property type="entry name" value="GMP_synthase"/>
</dbReference>
<dbReference type="InterPro" id="IPR025777">
    <property type="entry name" value="GMPS_ATP_PPase_dom"/>
</dbReference>
<dbReference type="InterPro" id="IPR022310">
    <property type="entry name" value="NAD/GMP_synthase"/>
</dbReference>
<dbReference type="InterPro" id="IPR014729">
    <property type="entry name" value="Rossmann-like_a/b/a_fold"/>
</dbReference>
<dbReference type="NCBIfam" id="TIGR00884">
    <property type="entry name" value="guaA_Cterm"/>
    <property type="match status" value="1"/>
</dbReference>
<dbReference type="NCBIfam" id="TIGR00888">
    <property type="entry name" value="guaA_Nterm"/>
    <property type="match status" value="1"/>
</dbReference>
<dbReference type="NCBIfam" id="NF000848">
    <property type="entry name" value="PRK00074.1"/>
    <property type="match status" value="1"/>
</dbReference>
<dbReference type="PANTHER" id="PTHR11922:SF2">
    <property type="entry name" value="GMP SYNTHASE [GLUTAMINE-HYDROLYZING]"/>
    <property type="match status" value="1"/>
</dbReference>
<dbReference type="PANTHER" id="PTHR11922">
    <property type="entry name" value="GMP SYNTHASE-RELATED"/>
    <property type="match status" value="1"/>
</dbReference>
<dbReference type="Pfam" id="PF00117">
    <property type="entry name" value="GATase"/>
    <property type="match status" value="1"/>
</dbReference>
<dbReference type="Pfam" id="PF00958">
    <property type="entry name" value="GMP_synt_C"/>
    <property type="match status" value="1"/>
</dbReference>
<dbReference type="Pfam" id="PF02540">
    <property type="entry name" value="NAD_synthase"/>
    <property type="match status" value="1"/>
</dbReference>
<dbReference type="PRINTS" id="PR00097">
    <property type="entry name" value="ANTSNTHASEII"/>
</dbReference>
<dbReference type="PRINTS" id="PR00099">
    <property type="entry name" value="CPSGATASE"/>
</dbReference>
<dbReference type="PRINTS" id="PR00096">
    <property type="entry name" value="GATASE"/>
</dbReference>
<dbReference type="SUPFAM" id="SSF52402">
    <property type="entry name" value="Adenine nucleotide alpha hydrolases-like"/>
    <property type="match status" value="1"/>
</dbReference>
<dbReference type="SUPFAM" id="SSF52317">
    <property type="entry name" value="Class I glutamine amidotransferase-like"/>
    <property type="match status" value="1"/>
</dbReference>
<dbReference type="SUPFAM" id="SSF54810">
    <property type="entry name" value="GMP synthetase C-terminal dimerisation domain"/>
    <property type="match status" value="1"/>
</dbReference>
<dbReference type="PROSITE" id="PS51273">
    <property type="entry name" value="GATASE_TYPE_1"/>
    <property type="match status" value="1"/>
</dbReference>
<dbReference type="PROSITE" id="PS51553">
    <property type="entry name" value="GMPS_ATP_PPASE"/>
    <property type="match status" value="1"/>
</dbReference>
<gene>
    <name evidence="1" type="primary">guaA</name>
    <name type="ordered locus">XAC2287</name>
</gene>
<protein>
    <recommendedName>
        <fullName evidence="1">GMP synthase [glutamine-hydrolyzing]</fullName>
        <ecNumber evidence="1">6.3.5.2</ecNumber>
    </recommendedName>
    <alternativeName>
        <fullName evidence="1">GMP synthetase</fullName>
    </alternativeName>
    <alternativeName>
        <fullName evidence="1">Glutamine amidotransferase</fullName>
    </alternativeName>
</protein>
<reference key="1">
    <citation type="journal article" date="2002" name="Nature">
        <title>Comparison of the genomes of two Xanthomonas pathogens with differing host specificities.</title>
        <authorList>
            <person name="da Silva A.C.R."/>
            <person name="Ferro J.A."/>
            <person name="Reinach F.C."/>
            <person name="Farah C.S."/>
            <person name="Furlan L.R."/>
            <person name="Quaggio R.B."/>
            <person name="Monteiro-Vitorello C.B."/>
            <person name="Van Sluys M.A."/>
            <person name="Almeida N.F. Jr."/>
            <person name="Alves L.M.C."/>
            <person name="do Amaral A.M."/>
            <person name="Bertolini M.C."/>
            <person name="Camargo L.E.A."/>
            <person name="Camarotte G."/>
            <person name="Cannavan F."/>
            <person name="Cardozo J."/>
            <person name="Chambergo F."/>
            <person name="Ciapina L.P."/>
            <person name="Cicarelli R.M.B."/>
            <person name="Coutinho L.L."/>
            <person name="Cursino-Santos J.R."/>
            <person name="El-Dorry H."/>
            <person name="Faria J.B."/>
            <person name="Ferreira A.J.S."/>
            <person name="Ferreira R.C.C."/>
            <person name="Ferro M.I.T."/>
            <person name="Formighieri E.F."/>
            <person name="Franco M.C."/>
            <person name="Greggio C.C."/>
            <person name="Gruber A."/>
            <person name="Katsuyama A.M."/>
            <person name="Kishi L.T."/>
            <person name="Leite R.P."/>
            <person name="Lemos E.G.M."/>
            <person name="Lemos M.V.F."/>
            <person name="Locali E.C."/>
            <person name="Machado M.A."/>
            <person name="Madeira A.M.B.N."/>
            <person name="Martinez-Rossi N.M."/>
            <person name="Martins E.C."/>
            <person name="Meidanis J."/>
            <person name="Menck C.F.M."/>
            <person name="Miyaki C.Y."/>
            <person name="Moon D.H."/>
            <person name="Moreira L.M."/>
            <person name="Novo M.T.M."/>
            <person name="Okura V.K."/>
            <person name="Oliveira M.C."/>
            <person name="Oliveira V.R."/>
            <person name="Pereira H.A."/>
            <person name="Rossi A."/>
            <person name="Sena J.A.D."/>
            <person name="Silva C."/>
            <person name="de Souza R.F."/>
            <person name="Spinola L.A.F."/>
            <person name="Takita M.A."/>
            <person name="Tamura R.E."/>
            <person name="Teixeira E.C."/>
            <person name="Tezza R.I.D."/>
            <person name="Trindade dos Santos M."/>
            <person name="Truffi D."/>
            <person name="Tsai S.M."/>
            <person name="White F.F."/>
            <person name="Setubal J.C."/>
            <person name="Kitajima J.P."/>
        </authorList>
    </citation>
    <scope>NUCLEOTIDE SEQUENCE [LARGE SCALE GENOMIC DNA]</scope>
    <source>
        <strain>306</strain>
    </source>
</reference>
<feature type="chain" id="PRO_0000140210" description="GMP synthase [glutamine-hydrolyzing]">
    <location>
        <begin position="1"/>
        <end position="521"/>
    </location>
</feature>
<feature type="domain" description="Glutamine amidotransferase type-1" evidence="1">
    <location>
        <begin position="8"/>
        <end position="203"/>
    </location>
</feature>
<feature type="domain" description="GMPS ATP-PPase" evidence="1">
    <location>
        <begin position="204"/>
        <end position="396"/>
    </location>
</feature>
<feature type="active site" description="Nucleophile" evidence="1">
    <location>
        <position position="85"/>
    </location>
</feature>
<feature type="active site" evidence="1">
    <location>
        <position position="177"/>
    </location>
</feature>
<feature type="active site" evidence="1">
    <location>
        <position position="179"/>
    </location>
</feature>
<feature type="binding site" evidence="1">
    <location>
        <begin position="231"/>
        <end position="237"/>
    </location>
    <ligand>
        <name>ATP</name>
        <dbReference type="ChEBI" id="CHEBI:30616"/>
    </ligand>
</feature>
<proteinExistence type="inferred from homology"/>
<sequence length="521" mass="57126">MTNIHTDKILILDFGAQYTQLIARRIREIGVYCEIWAWDHDPSEIAGFGAKGIILSGGPESTTLPGAPVAPQEVFDSGLPVFGICYGMQTLAAQLGGATEAADQREFGHAEVDVVAADALFAGLTDHAGASRLNVWMSHGDHVSQVPPGFTITATTDRIPVAAMSNEAKRWYGVQFHPEVTHTLQGQTLLRRFVVDVCGCQTLWTAANIIEDQIARVREQVGDDEVILGLSGGVDSSVVAALLHKAIGDKLTCVFVDTGLLRWQEGDQVMAMFAEHMGVKVIRVNAADRYFAKLEGVRDPEAKRKIIGNLFVEIFDEESNKLANAKWLAQGTIYPDVIESAGSKTGKAHVIKSHHNVGGLPEHMKLGLVEPLRELFKDEVRRLGVELGLPRTMVYRHPFPGPGLGVRILGEVKREYAELLAKADAIFIDELRKADLYDTTSQAFAVFLPVKSVGVVGDARAYEWVIALRAVETIDFMTAHWAHLPYDFLGTVSNRIINELRGVSRVVYDISGKPPATIEWE</sequence>
<keyword id="KW-0067">ATP-binding</keyword>
<keyword id="KW-0315">Glutamine amidotransferase</keyword>
<keyword id="KW-0332">GMP biosynthesis</keyword>
<keyword id="KW-0436">Ligase</keyword>
<keyword id="KW-0547">Nucleotide-binding</keyword>
<keyword id="KW-0658">Purine biosynthesis</keyword>
<comment type="function">
    <text evidence="1">Catalyzes the synthesis of GMP from XMP.</text>
</comment>
<comment type="catalytic activity">
    <reaction evidence="1">
        <text>XMP + L-glutamine + ATP + H2O = GMP + L-glutamate + AMP + diphosphate + 2 H(+)</text>
        <dbReference type="Rhea" id="RHEA:11680"/>
        <dbReference type="ChEBI" id="CHEBI:15377"/>
        <dbReference type="ChEBI" id="CHEBI:15378"/>
        <dbReference type="ChEBI" id="CHEBI:29985"/>
        <dbReference type="ChEBI" id="CHEBI:30616"/>
        <dbReference type="ChEBI" id="CHEBI:33019"/>
        <dbReference type="ChEBI" id="CHEBI:57464"/>
        <dbReference type="ChEBI" id="CHEBI:58115"/>
        <dbReference type="ChEBI" id="CHEBI:58359"/>
        <dbReference type="ChEBI" id="CHEBI:456215"/>
        <dbReference type="EC" id="6.3.5.2"/>
    </reaction>
</comment>
<comment type="pathway">
    <text evidence="1">Purine metabolism; GMP biosynthesis; GMP from XMP (L-Gln route): step 1/1.</text>
</comment>
<comment type="subunit">
    <text evidence="1">Homodimer.</text>
</comment>
<accession>Q8PK88</accession>
<organism>
    <name type="scientific">Xanthomonas axonopodis pv. citri (strain 306)</name>
    <dbReference type="NCBI Taxonomy" id="190486"/>
    <lineage>
        <taxon>Bacteria</taxon>
        <taxon>Pseudomonadati</taxon>
        <taxon>Pseudomonadota</taxon>
        <taxon>Gammaproteobacteria</taxon>
        <taxon>Lysobacterales</taxon>
        <taxon>Lysobacteraceae</taxon>
        <taxon>Xanthomonas</taxon>
    </lineage>
</organism>
<name>GUAA_XANAC</name>
<evidence type="ECO:0000255" key="1">
    <source>
        <dbReference type="HAMAP-Rule" id="MF_00344"/>
    </source>
</evidence>